<dbReference type="EC" id="2.7.11.13" evidence="2"/>
<dbReference type="EMBL" id="BC154114">
    <property type="protein sequence ID" value="AAI54115.1"/>
    <property type="molecule type" value="mRNA"/>
</dbReference>
<dbReference type="RefSeq" id="NP_001103513.1">
    <property type="nucleotide sequence ID" value="NM_001110043.1"/>
</dbReference>
<dbReference type="SMR" id="A8KBH6"/>
<dbReference type="FunCoup" id="A8KBH6">
    <property type="interactions" value="3145"/>
</dbReference>
<dbReference type="STRING" id="8364.ENSXETP00000033079"/>
<dbReference type="PaxDb" id="8364-ENSXETP00000037655"/>
<dbReference type="GeneID" id="100038043"/>
<dbReference type="KEGG" id="xtr:100038043"/>
<dbReference type="AGR" id="Xenbase:XB-GENE-486491"/>
<dbReference type="CTD" id="5579"/>
<dbReference type="Xenbase" id="XB-GENE-486491">
    <property type="gene designation" value="prkcb"/>
</dbReference>
<dbReference type="eggNOG" id="KOG0696">
    <property type="taxonomic scope" value="Eukaryota"/>
</dbReference>
<dbReference type="InParanoid" id="A8KBH6"/>
<dbReference type="OMA" id="VVXQLKE"/>
<dbReference type="OrthoDB" id="63267at2759"/>
<dbReference type="Reactome" id="R-XTR-114516">
    <property type="pathway name" value="Disinhibition of SNARE formation"/>
</dbReference>
<dbReference type="Reactome" id="R-XTR-1169091">
    <property type="pathway name" value="Activation of NF-kappaB in B cells"/>
</dbReference>
<dbReference type="Reactome" id="R-XTR-4419969">
    <property type="pathway name" value="Depolymerization of the Nuclear Lamina"/>
</dbReference>
<dbReference type="Reactome" id="R-XTR-5099900">
    <property type="pathway name" value="WNT5A-dependent internalization of FZD4"/>
</dbReference>
<dbReference type="Reactome" id="R-XTR-5218921">
    <property type="pathway name" value="VEGFR2 mediated cell proliferation"/>
</dbReference>
<dbReference type="Reactome" id="R-XTR-5668599">
    <property type="pathway name" value="RHO GTPases Activate NADPH Oxidases"/>
</dbReference>
<dbReference type="Reactome" id="R-XTR-76005">
    <property type="pathway name" value="Response to elevated platelet cytosolic Ca2+"/>
</dbReference>
<dbReference type="Proteomes" id="UP000008143">
    <property type="component" value="Chromosome 9"/>
</dbReference>
<dbReference type="GO" id="GO:0005737">
    <property type="term" value="C:cytoplasm"/>
    <property type="evidence" value="ECO:0007669"/>
    <property type="project" value="UniProtKB-SubCell"/>
</dbReference>
<dbReference type="GO" id="GO:0016020">
    <property type="term" value="C:membrane"/>
    <property type="evidence" value="ECO:0007669"/>
    <property type="project" value="UniProtKB-SubCell"/>
</dbReference>
<dbReference type="GO" id="GO:0005634">
    <property type="term" value="C:nucleus"/>
    <property type="evidence" value="ECO:0000250"/>
    <property type="project" value="UniProtKB"/>
</dbReference>
<dbReference type="GO" id="GO:0005524">
    <property type="term" value="F:ATP binding"/>
    <property type="evidence" value="ECO:0007669"/>
    <property type="project" value="UniProtKB-KW"/>
</dbReference>
<dbReference type="GO" id="GO:0004698">
    <property type="term" value="F:calcium,diacylglycerol-dependent serine/threonine kinase activity"/>
    <property type="evidence" value="ECO:0000250"/>
    <property type="project" value="UniProtKB"/>
</dbReference>
<dbReference type="GO" id="GO:0003682">
    <property type="term" value="F:chromatin binding"/>
    <property type="evidence" value="ECO:0000250"/>
    <property type="project" value="UniProtKB"/>
</dbReference>
<dbReference type="GO" id="GO:0042393">
    <property type="term" value="F:histone binding"/>
    <property type="evidence" value="ECO:0000250"/>
    <property type="project" value="UniProtKB"/>
</dbReference>
<dbReference type="GO" id="GO:0035403">
    <property type="term" value="F:histone H3T6 kinase activity"/>
    <property type="evidence" value="ECO:0000250"/>
    <property type="project" value="UniProtKB"/>
</dbReference>
<dbReference type="GO" id="GO:0050681">
    <property type="term" value="F:nuclear androgen receptor binding"/>
    <property type="evidence" value="ECO:0000250"/>
    <property type="project" value="UniProtKB"/>
</dbReference>
<dbReference type="GO" id="GO:0106310">
    <property type="term" value="F:protein serine kinase activity"/>
    <property type="evidence" value="ECO:0007669"/>
    <property type="project" value="RHEA"/>
</dbReference>
<dbReference type="GO" id="GO:0003713">
    <property type="term" value="F:transcription coactivator activity"/>
    <property type="evidence" value="ECO:0000250"/>
    <property type="project" value="UniProtKB"/>
</dbReference>
<dbReference type="GO" id="GO:0008270">
    <property type="term" value="F:zinc ion binding"/>
    <property type="evidence" value="ECO:0007669"/>
    <property type="project" value="UniProtKB-KW"/>
</dbReference>
<dbReference type="GO" id="GO:0002250">
    <property type="term" value="P:adaptive immune response"/>
    <property type="evidence" value="ECO:0007669"/>
    <property type="project" value="UniProtKB-KW"/>
</dbReference>
<dbReference type="GO" id="GO:0006915">
    <property type="term" value="P:apoptotic process"/>
    <property type="evidence" value="ECO:0007669"/>
    <property type="project" value="UniProtKB-KW"/>
</dbReference>
<dbReference type="GO" id="GO:0042113">
    <property type="term" value="P:B cell activation"/>
    <property type="evidence" value="ECO:0000250"/>
    <property type="project" value="UniProtKB"/>
</dbReference>
<dbReference type="GO" id="GO:0050853">
    <property type="term" value="P:B cell receptor signaling pathway"/>
    <property type="evidence" value="ECO:0000250"/>
    <property type="project" value="UniProtKB"/>
</dbReference>
<dbReference type="GO" id="GO:0043123">
    <property type="term" value="P:positive regulation of canonical NF-kappaB signal transduction"/>
    <property type="evidence" value="ECO:0000250"/>
    <property type="project" value="UniProtKB"/>
</dbReference>
<dbReference type="GO" id="GO:0070528">
    <property type="term" value="P:protein kinase C signaling"/>
    <property type="evidence" value="ECO:0000250"/>
    <property type="project" value="UniProtKB"/>
</dbReference>
<dbReference type="GO" id="GO:0006357">
    <property type="term" value="P:regulation of transcription by RNA polymerase II"/>
    <property type="evidence" value="ECO:0000250"/>
    <property type="project" value="UniProtKB"/>
</dbReference>
<dbReference type="CDD" id="cd20833">
    <property type="entry name" value="C1_cPKC_rpt1"/>
    <property type="match status" value="1"/>
</dbReference>
<dbReference type="CDD" id="cd20836">
    <property type="entry name" value="C1_cPKC_rpt2"/>
    <property type="match status" value="1"/>
</dbReference>
<dbReference type="CDD" id="cd04026">
    <property type="entry name" value="C2_PKC_alpha_gamma"/>
    <property type="match status" value="1"/>
</dbReference>
<dbReference type="CDD" id="cd05616">
    <property type="entry name" value="STKc_cPKC_beta"/>
    <property type="match status" value="1"/>
</dbReference>
<dbReference type="FunFam" id="2.60.40.150:FF:000012">
    <property type="entry name" value="Kinase C alpha type"/>
    <property type="match status" value="1"/>
</dbReference>
<dbReference type="FunFam" id="1.10.510.10:FF:000023">
    <property type="entry name" value="Protein kinase C"/>
    <property type="match status" value="1"/>
</dbReference>
<dbReference type="FunFam" id="3.30.200.20:FF:000080">
    <property type="entry name" value="Protein kinase C"/>
    <property type="match status" value="1"/>
</dbReference>
<dbReference type="FunFam" id="3.30.200.20:FF:000103">
    <property type="entry name" value="Protein kinase C"/>
    <property type="match status" value="1"/>
</dbReference>
<dbReference type="FunFam" id="3.30.60.20:FF:000006">
    <property type="entry name" value="Protein kinase C"/>
    <property type="match status" value="1"/>
</dbReference>
<dbReference type="FunFam" id="3.30.60.20:FF:000031">
    <property type="entry name" value="Protein kinase C alpha"/>
    <property type="match status" value="1"/>
</dbReference>
<dbReference type="Gene3D" id="3.30.60.20">
    <property type="match status" value="2"/>
</dbReference>
<dbReference type="Gene3D" id="2.60.40.150">
    <property type="entry name" value="C2 domain"/>
    <property type="match status" value="1"/>
</dbReference>
<dbReference type="Gene3D" id="3.30.200.20">
    <property type="entry name" value="Phosphorylase Kinase, domain 1"/>
    <property type="match status" value="2"/>
</dbReference>
<dbReference type="Gene3D" id="1.10.510.10">
    <property type="entry name" value="Transferase(Phosphotransferase) domain 1"/>
    <property type="match status" value="1"/>
</dbReference>
<dbReference type="InterPro" id="IPR000961">
    <property type="entry name" value="AGC-kinase_C"/>
</dbReference>
<dbReference type="InterPro" id="IPR046349">
    <property type="entry name" value="C1-like_sf"/>
</dbReference>
<dbReference type="InterPro" id="IPR000008">
    <property type="entry name" value="C2_dom"/>
</dbReference>
<dbReference type="InterPro" id="IPR035892">
    <property type="entry name" value="C2_domain_sf"/>
</dbReference>
<dbReference type="InterPro" id="IPR034664">
    <property type="entry name" value="cPKC-beta"/>
</dbReference>
<dbReference type="InterPro" id="IPR020454">
    <property type="entry name" value="DAG/PE-bd"/>
</dbReference>
<dbReference type="InterPro" id="IPR011009">
    <property type="entry name" value="Kinase-like_dom_sf"/>
</dbReference>
<dbReference type="InterPro" id="IPR002219">
    <property type="entry name" value="PE/DAG-bd"/>
</dbReference>
<dbReference type="InterPro" id="IPR017892">
    <property type="entry name" value="Pkinase_C"/>
</dbReference>
<dbReference type="InterPro" id="IPR000719">
    <property type="entry name" value="Prot_kinase_dom"/>
</dbReference>
<dbReference type="InterPro" id="IPR017441">
    <property type="entry name" value="Protein_kinase_ATP_BS"/>
</dbReference>
<dbReference type="InterPro" id="IPR014375">
    <property type="entry name" value="Protein_kinase_C_a/b/g"/>
</dbReference>
<dbReference type="InterPro" id="IPR008271">
    <property type="entry name" value="Ser/Thr_kinase_AS"/>
</dbReference>
<dbReference type="PANTHER" id="PTHR24351">
    <property type="entry name" value="RIBOSOMAL PROTEIN S6 KINASE"/>
    <property type="match status" value="1"/>
</dbReference>
<dbReference type="Pfam" id="PF00130">
    <property type="entry name" value="C1_1"/>
    <property type="match status" value="2"/>
</dbReference>
<dbReference type="Pfam" id="PF00168">
    <property type="entry name" value="C2"/>
    <property type="match status" value="1"/>
</dbReference>
<dbReference type="Pfam" id="PF00069">
    <property type="entry name" value="Pkinase"/>
    <property type="match status" value="1"/>
</dbReference>
<dbReference type="Pfam" id="PF00433">
    <property type="entry name" value="Pkinase_C"/>
    <property type="match status" value="1"/>
</dbReference>
<dbReference type="PIRSF" id="PIRSF000550">
    <property type="entry name" value="PKC_alpha"/>
    <property type="match status" value="1"/>
</dbReference>
<dbReference type="PRINTS" id="PR00360">
    <property type="entry name" value="C2DOMAIN"/>
</dbReference>
<dbReference type="PRINTS" id="PR00008">
    <property type="entry name" value="DAGPEDOMAIN"/>
</dbReference>
<dbReference type="SMART" id="SM00109">
    <property type="entry name" value="C1"/>
    <property type="match status" value="2"/>
</dbReference>
<dbReference type="SMART" id="SM00239">
    <property type="entry name" value="C2"/>
    <property type="match status" value="1"/>
</dbReference>
<dbReference type="SMART" id="SM00133">
    <property type="entry name" value="S_TK_X"/>
    <property type="match status" value="1"/>
</dbReference>
<dbReference type="SMART" id="SM00220">
    <property type="entry name" value="S_TKc"/>
    <property type="match status" value="1"/>
</dbReference>
<dbReference type="SUPFAM" id="SSF49562">
    <property type="entry name" value="C2 domain (Calcium/lipid-binding domain, CaLB)"/>
    <property type="match status" value="1"/>
</dbReference>
<dbReference type="SUPFAM" id="SSF57889">
    <property type="entry name" value="Cysteine-rich domain"/>
    <property type="match status" value="2"/>
</dbReference>
<dbReference type="SUPFAM" id="SSF56112">
    <property type="entry name" value="Protein kinase-like (PK-like)"/>
    <property type="match status" value="1"/>
</dbReference>
<dbReference type="PROSITE" id="PS51285">
    <property type="entry name" value="AGC_KINASE_CTER"/>
    <property type="match status" value="1"/>
</dbReference>
<dbReference type="PROSITE" id="PS50004">
    <property type="entry name" value="C2"/>
    <property type="match status" value="1"/>
</dbReference>
<dbReference type="PROSITE" id="PS00107">
    <property type="entry name" value="PROTEIN_KINASE_ATP"/>
    <property type="match status" value="1"/>
</dbReference>
<dbReference type="PROSITE" id="PS50011">
    <property type="entry name" value="PROTEIN_KINASE_DOM"/>
    <property type="match status" value="1"/>
</dbReference>
<dbReference type="PROSITE" id="PS00108">
    <property type="entry name" value="PROTEIN_KINASE_ST"/>
    <property type="match status" value="1"/>
</dbReference>
<dbReference type="PROSITE" id="PS00479">
    <property type="entry name" value="ZF_DAG_PE_1"/>
    <property type="match status" value="2"/>
</dbReference>
<dbReference type="PROSITE" id="PS50081">
    <property type="entry name" value="ZF_DAG_PE_2"/>
    <property type="match status" value="2"/>
</dbReference>
<comment type="function">
    <text evidence="1">Calcium-activated and phospholipid-dependent serine/threonine-protein kinase involved in various processes such as regulation of the B-cell receptor (BCR) signalosome, apoptosis and transcription regulation. Plays a key role in B-cell activation and function by regulating BCR-induced NF-kappa-B activation and B-cell survival. Required for recruitment and activation of the IKK kinase to lipid rafts and mediates phosphorylation of card11/carma1, leading to activate the NF-kappa-B signaling. Involved in apoptosis following oxidative damage: in case of oxidative conditions, specifically phosphorylates isoform p66Shc of shc1, leading to mitochondrial accumulation of p66Shc, where p66Shc acts as a reactive oxygen species producer. Acts as a coactivator of androgen receptor (andr)-dependent transcription, by being recruited to ANDR target genes and specifically mediating phosphorylation of 'Thr-6' of histone H3 (H3T6ph), a specific tag for epigenetic transcriptional activation (By similarity).</text>
</comment>
<comment type="catalytic activity">
    <reaction evidence="2">
        <text>L-seryl-[protein] + ATP = O-phospho-L-seryl-[protein] + ADP + H(+)</text>
        <dbReference type="Rhea" id="RHEA:17989"/>
        <dbReference type="Rhea" id="RHEA-COMP:9863"/>
        <dbReference type="Rhea" id="RHEA-COMP:11604"/>
        <dbReference type="ChEBI" id="CHEBI:15378"/>
        <dbReference type="ChEBI" id="CHEBI:29999"/>
        <dbReference type="ChEBI" id="CHEBI:30616"/>
        <dbReference type="ChEBI" id="CHEBI:83421"/>
        <dbReference type="ChEBI" id="CHEBI:456216"/>
        <dbReference type="EC" id="2.7.11.13"/>
    </reaction>
</comment>
<comment type="catalytic activity">
    <reaction evidence="2">
        <text>L-threonyl-[protein] + ATP = O-phospho-L-threonyl-[protein] + ADP + H(+)</text>
        <dbReference type="Rhea" id="RHEA:46608"/>
        <dbReference type="Rhea" id="RHEA-COMP:11060"/>
        <dbReference type="Rhea" id="RHEA-COMP:11605"/>
        <dbReference type="ChEBI" id="CHEBI:15378"/>
        <dbReference type="ChEBI" id="CHEBI:30013"/>
        <dbReference type="ChEBI" id="CHEBI:30616"/>
        <dbReference type="ChEBI" id="CHEBI:61977"/>
        <dbReference type="ChEBI" id="CHEBI:456216"/>
        <dbReference type="EC" id="2.7.11.13"/>
    </reaction>
</comment>
<comment type="cofactor">
    <cofactor evidence="3 4">
        <name>Ca(2+)</name>
        <dbReference type="ChEBI" id="CHEBI:29108"/>
    </cofactor>
    <text evidence="3">Binds 3 Ca(2+) ions per subunit. The ions are bound to the C2 domain.</text>
</comment>
<comment type="activity regulation">
    <text evidence="1">Activated by diacylglycerol which in turn phosphorylates a range of cellular proteins.</text>
</comment>
<comment type="subcellular location">
    <subcellularLocation>
        <location evidence="1">Cytoplasm</location>
    </subcellularLocation>
    <subcellularLocation>
        <location evidence="1">Nucleus</location>
    </subcellularLocation>
    <subcellularLocation>
        <location evidence="1">Membrane</location>
        <topology evidence="1">Peripheral membrane protein</topology>
    </subcellularLocation>
</comment>
<comment type="PTM">
    <text evidence="1">Phosphorylation on Thr-497 within the activation loop renders it competent to autophosphorylate. Subsequent autophosphorylation of Thr-638 maintains catalytic competence, and autophosphorylation on Ser-657 appears to release the kinase into the cytosol (By similarity).</text>
</comment>
<comment type="similarity">
    <text evidence="9">Belongs to the protein kinase superfamily. AGC Ser/Thr protein kinase family. PKC subfamily.</text>
</comment>
<reference key="1">
    <citation type="submission" date="2007-10" db="EMBL/GenBank/DDBJ databases">
        <authorList>
            <consortium name="NIH - Xenopus Gene Collection (XGC) project"/>
        </authorList>
    </citation>
    <scope>NUCLEOTIDE SEQUENCE [LARGE SCALE MRNA]</scope>
    <source>
        <tissue>Brain</tissue>
    </source>
</reference>
<keyword id="KW-1064">Adaptive immunity</keyword>
<keyword id="KW-0053">Apoptosis</keyword>
<keyword id="KW-0067">ATP-binding</keyword>
<keyword id="KW-0106">Calcium</keyword>
<keyword id="KW-0156">Chromatin regulator</keyword>
<keyword id="KW-0963">Cytoplasm</keyword>
<keyword id="KW-0391">Immunity</keyword>
<keyword id="KW-0418">Kinase</keyword>
<keyword id="KW-0472">Membrane</keyword>
<keyword id="KW-0479">Metal-binding</keyword>
<keyword id="KW-0547">Nucleotide-binding</keyword>
<keyword id="KW-0539">Nucleus</keyword>
<keyword id="KW-0597">Phosphoprotein</keyword>
<keyword id="KW-1185">Reference proteome</keyword>
<keyword id="KW-0677">Repeat</keyword>
<keyword id="KW-0723">Serine/threonine-protein kinase</keyword>
<keyword id="KW-0804">Transcription</keyword>
<keyword id="KW-0805">Transcription regulation</keyword>
<keyword id="KW-0808">Transferase</keyword>
<keyword id="KW-0862">Zinc</keyword>
<keyword id="KW-0863">Zinc-finger</keyword>
<name>KPCB_XENTR</name>
<gene>
    <name type="primary">prkcb</name>
    <name type="synonym">prkcb1</name>
</gene>
<protein>
    <recommendedName>
        <fullName>Protein kinase C beta type</fullName>
        <shortName>PKC-B</shortName>
        <shortName>PKC-beta</shortName>
        <ecNumber evidence="2">2.7.11.13</ecNumber>
    </recommendedName>
</protein>
<feature type="initiator methionine" description="Removed" evidence="1">
    <location>
        <position position="1"/>
    </location>
</feature>
<feature type="chain" id="PRO_0000394260" description="Protein kinase C beta type">
    <location>
        <begin position="2"/>
        <end position="670"/>
    </location>
</feature>
<feature type="domain" description="C2" evidence="4">
    <location>
        <begin position="155"/>
        <end position="272"/>
    </location>
</feature>
<feature type="domain" description="Protein kinase" evidence="5">
    <location>
        <begin position="339"/>
        <end position="597"/>
    </location>
</feature>
<feature type="domain" description="AGC-kinase C-terminal" evidence="7">
    <location>
        <begin position="598"/>
        <end position="668"/>
    </location>
</feature>
<feature type="zinc finger region" description="Phorbol-ester/DAG-type 1" evidence="6">
    <location>
        <begin position="33"/>
        <end position="83"/>
    </location>
</feature>
<feature type="zinc finger region" description="Phorbol-ester/DAG-type 2" evidence="6">
    <location>
        <begin position="98"/>
        <end position="148"/>
    </location>
</feature>
<feature type="active site" description="Proton acceptor" evidence="5 8">
    <location>
        <position position="463"/>
    </location>
</feature>
<feature type="binding site" evidence="3">
    <location>
        <position position="183"/>
    </location>
    <ligand>
        <name>Ca(2+)</name>
        <dbReference type="ChEBI" id="CHEBI:29108"/>
        <label>1</label>
    </ligand>
</feature>
<feature type="binding site" evidence="3">
    <location>
        <position position="184"/>
    </location>
    <ligand>
        <name>Ca(2+)</name>
        <dbReference type="ChEBI" id="CHEBI:29108"/>
        <label>1</label>
    </ligand>
</feature>
<feature type="binding site" evidence="3">
    <location>
        <position position="184"/>
    </location>
    <ligand>
        <name>Ca(2+)</name>
        <dbReference type="ChEBI" id="CHEBI:29108"/>
        <label>2</label>
    </ligand>
</feature>
<feature type="binding site" evidence="3">
    <location>
        <position position="190"/>
    </location>
    <ligand>
        <name>Ca(2+)</name>
        <dbReference type="ChEBI" id="CHEBI:29108"/>
        <label>2</label>
    </ligand>
</feature>
<feature type="binding site" evidence="3">
    <location>
        <position position="243"/>
    </location>
    <ligand>
        <name>Ca(2+)</name>
        <dbReference type="ChEBI" id="CHEBI:29108"/>
        <label>1</label>
    </ligand>
</feature>
<feature type="binding site" evidence="3">
    <location>
        <position position="243"/>
    </location>
    <ligand>
        <name>Ca(2+)</name>
        <dbReference type="ChEBI" id="CHEBI:29108"/>
        <label>2</label>
    </ligand>
</feature>
<feature type="binding site" evidence="3">
    <location>
        <position position="244"/>
    </location>
    <ligand>
        <name>Ca(2+)</name>
        <dbReference type="ChEBI" id="CHEBI:29108"/>
        <label>2</label>
    </ligand>
</feature>
<feature type="binding site" evidence="3">
    <location>
        <position position="245"/>
    </location>
    <ligand>
        <name>Ca(2+)</name>
        <dbReference type="ChEBI" id="CHEBI:29108"/>
        <label>1</label>
    </ligand>
</feature>
<feature type="binding site" evidence="3">
    <location>
        <position position="245"/>
    </location>
    <ligand>
        <name>Ca(2+)</name>
        <dbReference type="ChEBI" id="CHEBI:29108"/>
        <label>2</label>
    </ligand>
</feature>
<feature type="binding site" evidence="3">
    <location>
        <position position="245"/>
    </location>
    <ligand>
        <name>Ca(2+)</name>
        <dbReference type="ChEBI" id="CHEBI:29108"/>
        <label>3</label>
    </ligand>
</feature>
<feature type="binding site" evidence="3">
    <location>
        <position position="248"/>
    </location>
    <ligand>
        <name>Ca(2+)</name>
        <dbReference type="ChEBI" id="CHEBI:29108"/>
        <label>3</label>
    </ligand>
</feature>
<feature type="binding site" evidence="3">
    <location>
        <position position="249"/>
    </location>
    <ligand>
        <name>Ca(2+)</name>
        <dbReference type="ChEBI" id="CHEBI:29108"/>
        <label>3</label>
    </ligand>
</feature>
<feature type="binding site" evidence="3">
    <location>
        <position position="251"/>
    </location>
    <ligand>
        <name>Ca(2+)</name>
        <dbReference type="ChEBI" id="CHEBI:29108"/>
        <label>1</label>
    </ligand>
</feature>
<feature type="binding site" evidence="3">
    <location>
        <position position="251"/>
    </location>
    <ligand>
        <name>Ca(2+)</name>
        <dbReference type="ChEBI" id="CHEBI:29108"/>
        <label>3</label>
    </ligand>
</feature>
<feature type="binding site" evidence="5">
    <location>
        <begin position="345"/>
        <end position="353"/>
    </location>
    <ligand>
        <name>ATP</name>
        <dbReference type="ChEBI" id="CHEBI:30616"/>
    </ligand>
</feature>
<feature type="binding site" evidence="5">
    <location>
        <position position="368"/>
    </location>
    <ligand>
        <name>ATP</name>
        <dbReference type="ChEBI" id="CHEBI:30616"/>
    </ligand>
</feature>
<feature type="modified residue" description="Phosphothreonine" evidence="1">
    <location>
        <position position="497"/>
    </location>
</feature>
<feature type="modified residue" description="Phosphothreonine" evidence="1">
    <location>
        <position position="501"/>
    </location>
</feature>
<feature type="modified residue" description="Phosphothreonine; by autocatalysis" evidence="3">
    <location>
        <position position="631"/>
    </location>
</feature>
<feature type="modified residue" description="Phosphothreonine; by autocatalysis" evidence="1">
    <location>
        <position position="638"/>
    </location>
</feature>
<feature type="modified residue" description="Phosphoserine; by autocatalysis" evidence="1">
    <location>
        <position position="657"/>
    </location>
</feature>
<proteinExistence type="evidence at transcript level"/>
<accession>A8KBH6</accession>
<sequence>MADPAACEPGEDTTTRFARKGALRQKNVHEVKEHKFTARFFKQPTFCSHCTDFIWGFGKQGFQCQVCCFVVHKRCHEFVTFSCPGADKGPASDDPRSKHKFKIHTYSSPTFCDHCGSLLYGLIHQGMKCETCMMNVHKRCVMNVPSLCGTDHTERRGRIHIKAEIREEVLTVTVGDARNLVPMDPNGLSDPYVKLKLIPDPKSESKQKTKTIKCSLNPTWNESFKFQLKESDKDRRLSVEIWDWDLTSRNDFMGSLSFGISELLKAGVDGWFKLLSQEEGEYFNVPVPPEGEEGNEELRQKFERAKIGPGTKAVEEKVVNPMPKVDNNETRDRMKVSDFNFLKVLGKGSFGKVILAERKGTDELYAIKILKKDVVIQDDDVECTMVEKRVLALSGKPPFLTQLHSCFQTMDRLYFVMEYVNGGDLMYQIQQVGRFKEPHAVFYAAEIAIGLLFLHSKGIVYRDLKLDNVMLDSEGHIKIADFGMCKENMWDGVTTKTFCGTPDYIAPEIIAYQPYAKSVDWWAFGILLYEMLAGQAPFEGEDEDELFQSIMEHNVAYPKSMSKEAVAICKGLMTKHPGKRLGCGPEGERDIKDHAFFRYIDWEKLERNEIQPPYKPKACGRNAENFDKFFTRHPPVLTPPDHEVIRNIDQSEFEGFSYVNSDFAKEEEKD</sequence>
<evidence type="ECO:0000250" key="1"/>
<evidence type="ECO:0000250" key="2">
    <source>
        <dbReference type="UniProtKB" id="P05771"/>
    </source>
</evidence>
<evidence type="ECO:0000250" key="3">
    <source>
        <dbReference type="UniProtKB" id="P68403"/>
    </source>
</evidence>
<evidence type="ECO:0000255" key="4">
    <source>
        <dbReference type="PROSITE-ProRule" id="PRU00041"/>
    </source>
</evidence>
<evidence type="ECO:0000255" key="5">
    <source>
        <dbReference type="PROSITE-ProRule" id="PRU00159"/>
    </source>
</evidence>
<evidence type="ECO:0000255" key="6">
    <source>
        <dbReference type="PROSITE-ProRule" id="PRU00226"/>
    </source>
</evidence>
<evidence type="ECO:0000255" key="7">
    <source>
        <dbReference type="PROSITE-ProRule" id="PRU00618"/>
    </source>
</evidence>
<evidence type="ECO:0000255" key="8">
    <source>
        <dbReference type="PROSITE-ProRule" id="PRU10027"/>
    </source>
</evidence>
<evidence type="ECO:0000305" key="9"/>
<organism>
    <name type="scientific">Xenopus tropicalis</name>
    <name type="common">Western clawed frog</name>
    <name type="synonym">Silurana tropicalis</name>
    <dbReference type="NCBI Taxonomy" id="8364"/>
    <lineage>
        <taxon>Eukaryota</taxon>
        <taxon>Metazoa</taxon>
        <taxon>Chordata</taxon>
        <taxon>Craniata</taxon>
        <taxon>Vertebrata</taxon>
        <taxon>Euteleostomi</taxon>
        <taxon>Amphibia</taxon>
        <taxon>Batrachia</taxon>
        <taxon>Anura</taxon>
        <taxon>Pipoidea</taxon>
        <taxon>Pipidae</taxon>
        <taxon>Xenopodinae</taxon>
        <taxon>Xenopus</taxon>
        <taxon>Silurana</taxon>
    </lineage>
</organism>